<accession>A3CNV3</accession>
<reference key="1">
    <citation type="journal article" date="2007" name="J. Bacteriol.">
        <title>Genome of the opportunistic pathogen Streptococcus sanguinis.</title>
        <authorList>
            <person name="Xu P."/>
            <person name="Alves J.M."/>
            <person name="Kitten T."/>
            <person name="Brown A."/>
            <person name="Chen Z."/>
            <person name="Ozaki L.S."/>
            <person name="Manque P."/>
            <person name="Ge X."/>
            <person name="Serrano M.G."/>
            <person name="Puiu D."/>
            <person name="Hendricks S."/>
            <person name="Wang Y."/>
            <person name="Chaplin M.D."/>
            <person name="Akan D."/>
            <person name="Paik S."/>
            <person name="Peterson D.L."/>
            <person name="Macrina F.L."/>
            <person name="Buck G.A."/>
        </authorList>
    </citation>
    <scope>NUCLEOTIDE SEQUENCE [LARGE SCALE GENOMIC DNA]</scope>
    <source>
        <strain>SK36</strain>
    </source>
</reference>
<comment type="function">
    <text evidence="1">Catalyzes the transfer of the enolpyruvyl moiety of phosphoenolpyruvate (PEP) to the 5-hydroxyl of shikimate-3-phosphate (S3P) to produce enolpyruvyl shikimate-3-phosphate and inorganic phosphate.</text>
</comment>
<comment type="catalytic activity">
    <reaction evidence="1">
        <text>3-phosphoshikimate + phosphoenolpyruvate = 5-O-(1-carboxyvinyl)-3-phosphoshikimate + phosphate</text>
        <dbReference type="Rhea" id="RHEA:21256"/>
        <dbReference type="ChEBI" id="CHEBI:43474"/>
        <dbReference type="ChEBI" id="CHEBI:57701"/>
        <dbReference type="ChEBI" id="CHEBI:58702"/>
        <dbReference type="ChEBI" id="CHEBI:145989"/>
        <dbReference type="EC" id="2.5.1.19"/>
    </reaction>
    <physiologicalReaction direction="left-to-right" evidence="1">
        <dbReference type="Rhea" id="RHEA:21257"/>
    </physiologicalReaction>
</comment>
<comment type="pathway">
    <text evidence="1">Metabolic intermediate biosynthesis; chorismate biosynthesis; chorismate from D-erythrose 4-phosphate and phosphoenolpyruvate: step 6/7.</text>
</comment>
<comment type="subunit">
    <text evidence="1">Monomer.</text>
</comment>
<comment type="subcellular location">
    <subcellularLocation>
        <location evidence="1">Cytoplasm</location>
    </subcellularLocation>
</comment>
<comment type="similarity">
    <text evidence="1">Belongs to the EPSP synthase family.</text>
</comment>
<dbReference type="EC" id="2.5.1.19" evidence="1"/>
<dbReference type="EMBL" id="CP000387">
    <property type="protein sequence ID" value="ABN44858.1"/>
    <property type="molecule type" value="Genomic_DNA"/>
</dbReference>
<dbReference type="RefSeq" id="WP_011837158.1">
    <property type="nucleotide sequence ID" value="NC_009009.1"/>
</dbReference>
<dbReference type="RefSeq" id="YP_001035408.1">
    <property type="nucleotide sequence ID" value="NC_009009.1"/>
</dbReference>
<dbReference type="SMR" id="A3CNV3"/>
<dbReference type="STRING" id="388919.SSA_1464"/>
<dbReference type="KEGG" id="ssa:SSA_1464"/>
<dbReference type="PATRIC" id="fig|388919.9.peg.1389"/>
<dbReference type="eggNOG" id="COG0128">
    <property type="taxonomic scope" value="Bacteria"/>
</dbReference>
<dbReference type="HOGENOM" id="CLU_024321_0_1_9"/>
<dbReference type="OrthoDB" id="9809920at2"/>
<dbReference type="UniPathway" id="UPA00053">
    <property type="reaction ID" value="UER00089"/>
</dbReference>
<dbReference type="Proteomes" id="UP000002148">
    <property type="component" value="Chromosome"/>
</dbReference>
<dbReference type="GO" id="GO:0005737">
    <property type="term" value="C:cytoplasm"/>
    <property type="evidence" value="ECO:0007669"/>
    <property type="project" value="UniProtKB-SubCell"/>
</dbReference>
<dbReference type="GO" id="GO:0003866">
    <property type="term" value="F:3-phosphoshikimate 1-carboxyvinyltransferase activity"/>
    <property type="evidence" value="ECO:0007669"/>
    <property type="project" value="UniProtKB-UniRule"/>
</dbReference>
<dbReference type="GO" id="GO:0008652">
    <property type="term" value="P:amino acid biosynthetic process"/>
    <property type="evidence" value="ECO:0007669"/>
    <property type="project" value="UniProtKB-KW"/>
</dbReference>
<dbReference type="GO" id="GO:0009073">
    <property type="term" value="P:aromatic amino acid family biosynthetic process"/>
    <property type="evidence" value="ECO:0007669"/>
    <property type="project" value="UniProtKB-KW"/>
</dbReference>
<dbReference type="GO" id="GO:0009423">
    <property type="term" value="P:chorismate biosynthetic process"/>
    <property type="evidence" value="ECO:0007669"/>
    <property type="project" value="UniProtKB-UniRule"/>
</dbReference>
<dbReference type="CDD" id="cd01556">
    <property type="entry name" value="EPSP_synthase"/>
    <property type="match status" value="1"/>
</dbReference>
<dbReference type="FunFam" id="3.65.10.10:FF:000005">
    <property type="entry name" value="3-phosphoshikimate 1-carboxyvinyltransferase"/>
    <property type="match status" value="1"/>
</dbReference>
<dbReference type="FunFam" id="3.65.10.10:FF:000006">
    <property type="entry name" value="3-phosphoshikimate 1-carboxyvinyltransferase"/>
    <property type="match status" value="1"/>
</dbReference>
<dbReference type="Gene3D" id="3.65.10.10">
    <property type="entry name" value="Enolpyruvate transferase domain"/>
    <property type="match status" value="2"/>
</dbReference>
<dbReference type="HAMAP" id="MF_00210">
    <property type="entry name" value="EPSP_synth"/>
    <property type="match status" value="1"/>
</dbReference>
<dbReference type="InterPro" id="IPR001986">
    <property type="entry name" value="Enolpyruvate_Tfrase_dom"/>
</dbReference>
<dbReference type="InterPro" id="IPR036968">
    <property type="entry name" value="Enolpyruvate_Tfrase_sf"/>
</dbReference>
<dbReference type="InterPro" id="IPR006264">
    <property type="entry name" value="EPSP_synthase"/>
</dbReference>
<dbReference type="InterPro" id="IPR023193">
    <property type="entry name" value="EPSP_synthase_CS"/>
</dbReference>
<dbReference type="InterPro" id="IPR013792">
    <property type="entry name" value="RNA3'P_cycl/enolpyr_Trfase_a/b"/>
</dbReference>
<dbReference type="NCBIfam" id="TIGR01356">
    <property type="entry name" value="aroA"/>
    <property type="match status" value="1"/>
</dbReference>
<dbReference type="PANTHER" id="PTHR21090">
    <property type="entry name" value="AROM/DEHYDROQUINATE SYNTHASE"/>
    <property type="match status" value="1"/>
</dbReference>
<dbReference type="PANTHER" id="PTHR21090:SF5">
    <property type="entry name" value="PENTAFUNCTIONAL AROM POLYPEPTIDE"/>
    <property type="match status" value="1"/>
</dbReference>
<dbReference type="Pfam" id="PF00275">
    <property type="entry name" value="EPSP_synthase"/>
    <property type="match status" value="1"/>
</dbReference>
<dbReference type="PIRSF" id="PIRSF000505">
    <property type="entry name" value="EPSPS"/>
    <property type="match status" value="1"/>
</dbReference>
<dbReference type="SUPFAM" id="SSF55205">
    <property type="entry name" value="EPT/RTPC-like"/>
    <property type="match status" value="1"/>
</dbReference>
<dbReference type="PROSITE" id="PS00104">
    <property type="entry name" value="EPSP_SYNTHASE_1"/>
    <property type="match status" value="1"/>
</dbReference>
<dbReference type="PROSITE" id="PS00885">
    <property type="entry name" value="EPSP_SYNTHASE_2"/>
    <property type="match status" value="1"/>
</dbReference>
<evidence type="ECO:0000255" key="1">
    <source>
        <dbReference type="HAMAP-Rule" id="MF_00210"/>
    </source>
</evidence>
<gene>
    <name evidence="1" type="primary">aroA</name>
    <name type="ordered locus">SSA_1464</name>
</gene>
<keyword id="KW-0028">Amino-acid biosynthesis</keyword>
<keyword id="KW-0057">Aromatic amino acid biosynthesis</keyword>
<keyword id="KW-0963">Cytoplasm</keyword>
<keyword id="KW-1185">Reference proteome</keyword>
<keyword id="KW-0808">Transferase</keyword>
<proteinExistence type="inferred from homology"/>
<organism>
    <name type="scientific">Streptococcus sanguinis (strain SK36)</name>
    <dbReference type="NCBI Taxonomy" id="388919"/>
    <lineage>
        <taxon>Bacteria</taxon>
        <taxon>Bacillati</taxon>
        <taxon>Bacillota</taxon>
        <taxon>Bacilli</taxon>
        <taxon>Lactobacillales</taxon>
        <taxon>Streptococcaceae</taxon>
        <taxon>Streptococcus</taxon>
    </lineage>
</organism>
<feature type="chain" id="PRO_1000012498" description="3-phosphoshikimate 1-carboxyvinyltransferase">
    <location>
        <begin position="1"/>
        <end position="427"/>
    </location>
</feature>
<feature type="active site" description="Proton acceptor" evidence="1">
    <location>
        <position position="312"/>
    </location>
</feature>
<feature type="binding site" evidence="1">
    <location>
        <position position="20"/>
    </location>
    <ligand>
        <name>3-phosphoshikimate</name>
        <dbReference type="ChEBI" id="CHEBI:145989"/>
    </ligand>
</feature>
<feature type="binding site" evidence="1">
    <location>
        <position position="20"/>
    </location>
    <ligand>
        <name>phosphoenolpyruvate</name>
        <dbReference type="ChEBI" id="CHEBI:58702"/>
    </ligand>
</feature>
<feature type="binding site" evidence="1">
    <location>
        <position position="21"/>
    </location>
    <ligand>
        <name>3-phosphoshikimate</name>
        <dbReference type="ChEBI" id="CHEBI:145989"/>
    </ligand>
</feature>
<feature type="binding site" evidence="1">
    <location>
        <position position="25"/>
    </location>
    <ligand>
        <name>3-phosphoshikimate</name>
        <dbReference type="ChEBI" id="CHEBI:145989"/>
    </ligand>
</feature>
<feature type="binding site" evidence="1">
    <location>
        <position position="92"/>
    </location>
    <ligand>
        <name>phosphoenolpyruvate</name>
        <dbReference type="ChEBI" id="CHEBI:58702"/>
    </ligand>
</feature>
<feature type="binding site" evidence="1">
    <location>
        <position position="120"/>
    </location>
    <ligand>
        <name>phosphoenolpyruvate</name>
        <dbReference type="ChEBI" id="CHEBI:58702"/>
    </ligand>
</feature>
<feature type="binding site" evidence="1">
    <location>
        <position position="166"/>
    </location>
    <ligand>
        <name>3-phosphoshikimate</name>
        <dbReference type="ChEBI" id="CHEBI:145989"/>
    </ligand>
</feature>
<feature type="binding site" evidence="1">
    <location>
        <position position="168"/>
    </location>
    <ligand>
        <name>3-phosphoshikimate</name>
        <dbReference type="ChEBI" id="CHEBI:145989"/>
    </ligand>
</feature>
<feature type="binding site" evidence="1">
    <location>
        <position position="168"/>
    </location>
    <ligand>
        <name>phosphoenolpyruvate</name>
        <dbReference type="ChEBI" id="CHEBI:58702"/>
    </ligand>
</feature>
<feature type="binding site" evidence="1">
    <location>
        <position position="312"/>
    </location>
    <ligand>
        <name>3-phosphoshikimate</name>
        <dbReference type="ChEBI" id="CHEBI:145989"/>
    </ligand>
</feature>
<feature type="binding site" evidence="1">
    <location>
        <position position="339"/>
    </location>
    <ligand>
        <name>3-phosphoshikimate</name>
        <dbReference type="ChEBI" id="CHEBI:145989"/>
    </ligand>
</feature>
<feature type="binding site" evidence="1">
    <location>
        <position position="343"/>
    </location>
    <ligand>
        <name>phosphoenolpyruvate</name>
        <dbReference type="ChEBI" id="CHEBI:58702"/>
    </ligand>
</feature>
<feature type="binding site" evidence="1">
    <location>
        <position position="385"/>
    </location>
    <ligand>
        <name>phosphoenolpyruvate</name>
        <dbReference type="ChEBI" id="CHEBI:58702"/>
    </ligand>
</feature>
<sequence length="427" mass="46047">MKLSTNVKGLKGRIRVPGDKSISHRSIIFGSLAKGVTTVRDILRGEDVLSTMQVFRDLGVQIEDDGNLVKIHGVGFEGLQAPKNKLDMGNSGTSIRLISGVLAGQDFEAEMFGDDSLSKRPMDRVTIPLRQMGVEIAGRTERDLPPLKMKGSRELQPIHYQLPVASAQVKSALIFAALQAQGESVIIEKEITRNHTEDMIAQFGGQIEVEGKEIRIQGGQEFTAQEVTVPGDISSAAFWLVAGLIVPDSKIVLENVGINETRTGILEVIEAMGGRMTLSDVDPVAKSATITVETSELKGTEIGGEIIPRLIDELPIIALLATQAQGRTVIRDAEELKVKETDRIQVVADALNSMGAAITPTEDGMIIEGKTPLHGAQVNTLGDHRIGMMTAIAALLAQSSQVELERSEAIKTSYPNFFNDLEGLMHG</sequence>
<protein>
    <recommendedName>
        <fullName evidence="1">3-phosphoshikimate 1-carboxyvinyltransferase</fullName>
        <ecNumber evidence="1">2.5.1.19</ecNumber>
    </recommendedName>
    <alternativeName>
        <fullName evidence="1">5-enolpyruvylshikimate-3-phosphate synthase</fullName>
        <shortName evidence="1">EPSP synthase</shortName>
        <shortName evidence="1">EPSPS</shortName>
    </alternativeName>
</protein>
<name>AROA_STRSV</name>